<protein>
    <recommendedName>
        <fullName>Glutaredoxin-2, mitochondrial</fullName>
    </recommendedName>
</protein>
<evidence type="ECO:0000250" key="1"/>
<evidence type="ECO:0000255" key="2"/>
<evidence type="ECO:0000255" key="3">
    <source>
        <dbReference type="PROSITE-ProRule" id="PRU00686"/>
    </source>
</evidence>
<evidence type="ECO:0000269" key="4">
    <source>
    </source>
</evidence>
<evidence type="ECO:0000269" key="5">
    <source>
    </source>
</evidence>
<evidence type="ECO:0000269" key="6">
    <source>
    </source>
</evidence>
<evidence type="ECO:0000269" key="7">
    <source>
    </source>
</evidence>
<evidence type="ECO:0000269" key="8">
    <source>
    </source>
</evidence>
<evidence type="ECO:0000269" key="9">
    <source>
    </source>
</evidence>
<evidence type="ECO:0000269" key="10">
    <source>
    </source>
</evidence>
<evidence type="ECO:0000269" key="11">
    <source>
    </source>
</evidence>
<evidence type="ECO:0000269" key="12">
    <source ref="3"/>
</evidence>
<evidence type="ECO:0000303" key="13">
    <source>
    </source>
</evidence>
<evidence type="ECO:0000305" key="14"/>
<evidence type="ECO:0007744" key="15">
    <source>
    </source>
</evidence>
<evidence type="ECO:0007829" key="16">
    <source>
        <dbReference type="PDB" id="2CQ9"/>
    </source>
</evidence>
<evidence type="ECO:0007829" key="17">
    <source>
        <dbReference type="PDB" id="2HT9"/>
    </source>
</evidence>
<name>GLRX2_HUMAN</name>
<comment type="function">
    <text evidence="4 5 8 9">Glutathione-dependent oxidoreductase that facilitates the maintenance of mitochondrial redox homeostasis upon induction of apoptosis by oxidative stress. Involved in response to hydrogen peroxide and regulation of apoptosis caused by oxidative stress. Acts as a very efficient catalyst of monothiol reactions because of its high affinity for protein glutathione-mixed disulfides. Can receive electrons not only from glutathione (GSH), but also from thioredoxin reductase supporting both monothiol and dithiol reactions. Efficiently catalyzes both glutathionylation and deglutathionylation of mitochondrial complex I, which in turn regulates the superoxide production by the complex. Overexpression decreases the susceptibility to apoptosis and prevents loss of cardiolipin and cytochrome c release.</text>
</comment>
<comment type="activity regulation">
    <text evidence="10">The 2Fe-2S present in the homodimer leads to inactivation of the enzyme. The 2Fe-2S may serve as a redox sensor: the presence of one-electron oxidants or reductants leading to the loss of the 2Fe-2S cluster, subsequent monomerization and activation of the enzyme. Unlike other glutaredoxins, it is not inhibited by oxidation of structural Cys residues.</text>
</comment>
<comment type="biophysicochemical properties">
    <kinetics>
        <KM evidence="5">5.9 mM for GSH</KM>
        <KM evidence="5">0.77 mM for glutathionylated ribonuclease A</KM>
        <KM evidence="5">4.3 mM for glutathionylated BSA</KM>
        <KM evidence="5">0.11 mM for glutathionylated beta-mercaptoethanol</KM>
    </kinetics>
</comment>
<comment type="subunit">
    <text evidence="10 11">Monomer; active form. Homodimer; inactive form. The homodimer is probably linked by 1 2Fe-2S cluster.</text>
</comment>
<comment type="interaction">
    <interactant intactId="EBI-12102178">
        <id>Q9NS18</id>
    </interactant>
    <interactant intactId="EBI-1044712">
        <id>Q7Z4W1</id>
        <label>DCXR</label>
    </interactant>
    <organismsDiffer>false</organismsDiffer>
    <experiments>3</experiments>
</comment>
<comment type="interaction">
    <interactant intactId="EBI-12102178">
        <id>Q9NS18</id>
    </interactant>
    <interactant intactId="EBI-747605">
        <id>Q9UKW6</id>
        <label>ELF5</label>
    </interactant>
    <organismsDiffer>false</organismsDiffer>
    <experiments>3</experiments>
</comment>
<comment type="subcellular location">
    <molecule>Isoform 1</molecule>
    <subcellularLocation>
        <location>Mitochondrion</location>
    </subcellularLocation>
</comment>
<comment type="subcellular location">
    <molecule>Isoform 2</molecule>
    <subcellularLocation>
        <location>Nucleus</location>
    </subcellularLocation>
</comment>
<comment type="alternative products">
    <event type="alternative splicing"/>
    <isoform>
        <id>Q9NS18-1</id>
        <name>1</name>
        <name>Grx2a</name>
        <sequence type="displayed"/>
    </isoform>
    <isoform>
        <id>Q9NS18-2</id>
        <name>2</name>
        <name>Grx2b</name>
        <sequence type="described" ref="VSP_015221"/>
    </isoform>
</comment>
<comment type="tissue specificity">
    <text evidence="4 6 7">Widely expressed. Expressed in brain, heart, skeletal muscle, colon, thymus, spleen, kidney, liver, small intestine, placenta and lung. Not expressed in peripheral blood leukocytes.</text>
</comment>
<comment type="miscellaneous">
    <text>The absence of GLRX2 dramatically sensitizes cells to cell death induced by doxorubicin/adriamycin and phenylarsine oxide.</text>
</comment>
<comment type="similarity">
    <text evidence="14">Belongs to the glutaredoxin family.</text>
</comment>
<comment type="sequence caution" evidence="14">
    <conflict type="frameshift">
        <sequence resource="EMBL-CDS" id="AAD34128"/>
    </conflict>
</comment>
<comment type="sequence caution" evidence="14">
    <conflict type="erroneous initiation">
        <sequence resource="EMBL-CDS" id="AAH28113"/>
    </conflict>
</comment>
<dbReference type="EMBL" id="AF132495">
    <property type="protein sequence ID" value="AAF37320.2"/>
    <property type="molecule type" value="mRNA"/>
</dbReference>
<dbReference type="EMBL" id="AF290514">
    <property type="protein sequence ID" value="AAK83089.1"/>
    <property type="molecule type" value="mRNA"/>
</dbReference>
<dbReference type="EMBL" id="AY038988">
    <property type="protein sequence ID" value="AAK72499.1"/>
    <property type="molecule type" value="mRNA"/>
</dbReference>
<dbReference type="EMBL" id="DQ194815">
    <property type="protein sequence ID" value="ABA03170.1"/>
    <property type="molecule type" value="Genomic_DNA"/>
</dbReference>
<dbReference type="EMBL" id="AL136370">
    <property type="status" value="NOT_ANNOTATED_CDS"/>
    <property type="molecule type" value="Genomic_DNA"/>
</dbReference>
<dbReference type="EMBL" id="AF151891">
    <property type="protein sequence ID" value="AAD34128.1"/>
    <property type="status" value="ALT_FRAME"/>
    <property type="molecule type" value="mRNA"/>
</dbReference>
<dbReference type="EMBL" id="BC028113">
    <property type="protein sequence ID" value="AAH28113.1"/>
    <property type="status" value="ALT_INIT"/>
    <property type="molecule type" value="mRNA"/>
</dbReference>
<dbReference type="CCDS" id="CCDS1380.1">
    <molecule id="Q9NS18-2"/>
</dbReference>
<dbReference type="CCDS" id="CCDS1381.1">
    <molecule id="Q9NS18-1"/>
</dbReference>
<dbReference type="RefSeq" id="NP_001230328.1">
    <property type="nucleotide sequence ID" value="NM_001243399.1"/>
</dbReference>
<dbReference type="RefSeq" id="NP_001306220.1">
    <property type="nucleotide sequence ID" value="NM_001319291.1"/>
</dbReference>
<dbReference type="RefSeq" id="NP_057150.2">
    <molecule id="Q9NS18-2"/>
    <property type="nucleotide sequence ID" value="NM_016066.4"/>
</dbReference>
<dbReference type="RefSeq" id="NP_932066.1">
    <molecule id="Q9NS18-1"/>
    <property type="nucleotide sequence ID" value="NM_197962.3"/>
</dbReference>
<dbReference type="RefSeq" id="XP_016856886.1">
    <property type="nucleotide sequence ID" value="XM_017001397.1"/>
</dbReference>
<dbReference type="PDB" id="2CQ9">
    <property type="method" value="NMR"/>
    <property type="chains" value="A=48-164"/>
</dbReference>
<dbReference type="PDB" id="2FLS">
    <property type="method" value="X-ray"/>
    <property type="resolution" value="2.05 A"/>
    <property type="chains" value="A=56-164"/>
</dbReference>
<dbReference type="PDB" id="2HT9">
    <property type="method" value="X-ray"/>
    <property type="resolution" value="1.90 A"/>
    <property type="chains" value="A/B=41-164"/>
</dbReference>
<dbReference type="PDBsum" id="2CQ9"/>
<dbReference type="PDBsum" id="2FLS"/>
<dbReference type="PDBsum" id="2HT9"/>
<dbReference type="SMR" id="Q9NS18"/>
<dbReference type="BioGRID" id="119228">
    <property type="interactions" value="11"/>
</dbReference>
<dbReference type="FunCoup" id="Q9NS18">
    <property type="interactions" value="1892"/>
</dbReference>
<dbReference type="IntAct" id="Q9NS18">
    <property type="interactions" value="3"/>
</dbReference>
<dbReference type="STRING" id="9606.ENSP00000356410"/>
<dbReference type="DrugBank" id="DB00143">
    <property type="generic name" value="Glutathione"/>
</dbReference>
<dbReference type="GlyGen" id="Q9NS18">
    <property type="glycosylation" value="1 site, 1 N-linked glycan (1 site)"/>
</dbReference>
<dbReference type="iPTMnet" id="Q9NS18"/>
<dbReference type="PhosphoSitePlus" id="Q9NS18"/>
<dbReference type="BioMuta" id="GLRX2"/>
<dbReference type="DMDM" id="73919686"/>
<dbReference type="jPOST" id="Q9NS18"/>
<dbReference type="MassIVE" id="Q9NS18"/>
<dbReference type="PaxDb" id="9606-ENSP00000356410"/>
<dbReference type="PeptideAtlas" id="Q9NS18"/>
<dbReference type="ProteomicsDB" id="82463">
    <molecule id="Q9NS18-1"/>
</dbReference>
<dbReference type="ProteomicsDB" id="82464">
    <molecule id="Q9NS18-2"/>
</dbReference>
<dbReference type="Pumba" id="Q9NS18"/>
<dbReference type="Antibodypedia" id="20620">
    <property type="antibodies" value="180 antibodies from 28 providers"/>
</dbReference>
<dbReference type="DNASU" id="51022"/>
<dbReference type="Ensembl" id="ENST00000367439.8">
    <molecule id="Q9NS18-1"/>
    <property type="protein sequence ID" value="ENSP00000356409.3"/>
    <property type="gene ID" value="ENSG00000023572.10"/>
</dbReference>
<dbReference type="Ensembl" id="ENST00000367440.3">
    <molecule id="Q9NS18-2"/>
    <property type="protein sequence ID" value="ENSP00000356410.3"/>
    <property type="gene ID" value="ENSG00000023572.10"/>
</dbReference>
<dbReference type="Ensembl" id="ENST00000608166.2">
    <molecule id="Q9NS18-1"/>
    <property type="protein sequence ID" value="ENSP00000494652.1"/>
    <property type="gene ID" value="ENSG00000023572.10"/>
</dbReference>
<dbReference type="GeneID" id="51022"/>
<dbReference type="KEGG" id="hsa:51022"/>
<dbReference type="MANE-Select" id="ENST00000367439.8">
    <property type="protein sequence ID" value="ENSP00000356409.3"/>
    <property type="RefSeq nucleotide sequence ID" value="NM_197962.3"/>
    <property type="RefSeq protein sequence ID" value="NP_932066.1"/>
</dbReference>
<dbReference type="UCSC" id="uc001gsz.3">
    <molecule id="Q9NS18-1"/>
    <property type="organism name" value="human"/>
</dbReference>
<dbReference type="AGR" id="HGNC:16065"/>
<dbReference type="CTD" id="51022"/>
<dbReference type="DisGeNET" id="51022"/>
<dbReference type="GeneCards" id="GLRX2"/>
<dbReference type="HGNC" id="HGNC:16065">
    <property type="gene designation" value="GLRX2"/>
</dbReference>
<dbReference type="HPA" id="ENSG00000023572">
    <property type="expression patterns" value="Low tissue specificity"/>
</dbReference>
<dbReference type="MIM" id="606820">
    <property type="type" value="gene"/>
</dbReference>
<dbReference type="neXtProt" id="NX_Q9NS18"/>
<dbReference type="OpenTargets" id="ENSG00000023572"/>
<dbReference type="PharmGKB" id="PA28732"/>
<dbReference type="VEuPathDB" id="HostDB:ENSG00000023572"/>
<dbReference type="eggNOG" id="KOG1752">
    <property type="taxonomic scope" value="Eukaryota"/>
</dbReference>
<dbReference type="GeneTree" id="ENSGT00940000162420"/>
<dbReference type="HOGENOM" id="CLU_026126_7_0_1"/>
<dbReference type="InParanoid" id="Q9NS18"/>
<dbReference type="OMA" id="DSTHAQF"/>
<dbReference type="OrthoDB" id="418495at2759"/>
<dbReference type="PAN-GO" id="Q9NS18">
    <property type="GO annotations" value="2 GO annotations based on evolutionary models"/>
</dbReference>
<dbReference type="PhylomeDB" id="Q9NS18"/>
<dbReference type="TreeFam" id="TF319627"/>
<dbReference type="PathwayCommons" id="Q9NS18"/>
<dbReference type="SABIO-RK" id="Q9NS18"/>
<dbReference type="SignaLink" id="Q9NS18"/>
<dbReference type="BioGRID-ORCS" id="51022">
    <property type="hits" value="15 hits in 1163 CRISPR screens"/>
</dbReference>
<dbReference type="EvolutionaryTrace" id="Q9NS18"/>
<dbReference type="GeneWiki" id="GLRX2"/>
<dbReference type="GenomeRNAi" id="51022"/>
<dbReference type="Pharos" id="Q9NS18">
    <property type="development level" value="Tbio"/>
</dbReference>
<dbReference type="PRO" id="PR:Q9NS18"/>
<dbReference type="Proteomes" id="UP000005640">
    <property type="component" value="Chromosome 1"/>
</dbReference>
<dbReference type="RNAct" id="Q9NS18">
    <property type="molecule type" value="protein"/>
</dbReference>
<dbReference type="Bgee" id="ENSG00000023572">
    <property type="expression patterns" value="Expressed in sperm and 208 other cell types or tissues"/>
</dbReference>
<dbReference type="GO" id="GO:0043231">
    <property type="term" value="C:intracellular membrane-bounded organelle"/>
    <property type="evidence" value="ECO:0000314"/>
    <property type="project" value="HPA"/>
</dbReference>
<dbReference type="GO" id="GO:0005739">
    <property type="term" value="C:mitochondrion"/>
    <property type="evidence" value="ECO:0000314"/>
    <property type="project" value="UniProtKB"/>
</dbReference>
<dbReference type="GO" id="GO:0005654">
    <property type="term" value="C:nucleoplasm"/>
    <property type="evidence" value="ECO:0000314"/>
    <property type="project" value="HPA"/>
</dbReference>
<dbReference type="GO" id="GO:0005634">
    <property type="term" value="C:nucleus"/>
    <property type="evidence" value="ECO:0000314"/>
    <property type="project" value="UniProtKB"/>
</dbReference>
<dbReference type="GO" id="GO:0051537">
    <property type="term" value="F:2 iron, 2 sulfur cluster binding"/>
    <property type="evidence" value="ECO:0007669"/>
    <property type="project" value="UniProtKB-KW"/>
</dbReference>
<dbReference type="GO" id="GO:0008794">
    <property type="term" value="F:arsenate reductase (glutaredoxin) activity"/>
    <property type="evidence" value="ECO:0000304"/>
    <property type="project" value="UniProtKB"/>
</dbReference>
<dbReference type="GO" id="GO:0009055">
    <property type="term" value="F:electron transfer activity"/>
    <property type="evidence" value="ECO:0000303"/>
    <property type="project" value="UniProtKB"/>
</dbReference>
<dbReference type="GO" id="GO:0015038">
    <property type="term" value="F:glutathione disulfide oxidoreductase activity"/>
    <property type="evidence" value="ECO:0000304"/>
    <property type="project" value="UniProtKB"/>
</dbReference>
<dbReference type="GO" id="GO:0046872">
    <property type="term" value="F:metal ion binding"/>
    <property type="evidence" value="ECO:0007669"/>
    <property type="project" value="UniProtKB-KW"/>
</dbReference>
<dbReference type="GO" id="GO:0003756">
    <property type="term" value="F:protein disulfide isomerase activity"/>
    <property type="evidence" value="ECO:0000304"/>
    <property type="project" value="UniProtKB"/>
</dbReference>
<dbReference type="GO" id="GO:0015035">
    <property type="term" value="F:protein-disulfide reductase activity"/>
    <property type="evidence" value="ECO:0000318"/>
    <property type="project" value="GO_Central"/>
</dbReference>
<dbReference type="GO" id="GO:0006915">
    <property type="term" value="P:apoptotic process"/>
    <property type="evidence" value="ECO:0000303"/>
    <property type="project" value="UniProtKB"/>
</dbReference>
<dbReference type="GO" id="GO:0030154">
    <property type="term" value="P:cell differentiation"/>
    <property type="evidence" value="ECO:0000303"/>
    <property type="project" value="UniProtKB"/>
</dbReference>
<dbReference type="GO" id="GO:0045454">
    <property type="term" value="P:cell redox homeostasis"/>
    <property type="evidence" value="ECO:0000304"/>
    <property type="project" value="UniProtKB"/>
</dbReference>
<dbReference type="GO" id="GO:0042262">
    <property type="term" value="P:DNA protection"/>
    <property type="evidence" value="ECO:0000303"/>
    <property type="project" value="UniProtKB"/>
</dbReference>
<dbReference type="GO" id="GO:0006749">
    <property type="term" value="P:glutathione metabolic process"/>
    <property type="evidence" value="ECO:0000304"/>
    <property type="project" value="UniProtKB"/>
</dbReference>
<dbReference type="GO" id="GO:0006355">
    <property type="term" value="P:regulation of DNA-templated transcription"/>
    <property type="evidence" value="ECO:0000303"/>
    <property type="project" value="UniProtKB"/>
</dbReference>
<dbReference type="GO" id="GO:0009966">
    <property type="term" value="P:regulation of signal transduction"/>
    <property type="evidence" value="ECO:0000303"/>
    <property type="project" value="UniProtKB"/>
</dbReference>
<dbReference type="GO" id="GO:0051775">
    <property type="term" value="P:response to redox state"/>
    <property type="evidence" value="ECO:0000304"/>
    <property type="project" value="UniProtKB"/>
</dbReference>
<dbReference type="GO" id="GO:0009266">
    <property type="term" value="P:response to temperature stimulus"/>
    <property type="evidence" value="ECO:0000303"/>
    <property type="project" value="UniProtKB"/>
</dbReference>
<dbReference type="CDD" id="cd03419">
    <property type="entry name" value="GRX_GRXh_1_2_like"/>
    <property type="match status" value="1"/>
</dbReference>
<dbReference type="FunFam" id="3.40.30.10:FF:000026">
    <property type="entry name" value="Glutaredoxin 2"/>
    <property type="match status" value="1"/>
</dbReference>
<dbReference type="Gene3D" id="3.40.30.10">
    <property type="entry name" value="Glutaredoxin"/>
    <property type="match status" value="1"/>
</dbReference>
<dbReference type="InterPro" id="IPR002109">
    <property type="entry name" value="Glutaredoxin"/>
</dbReference>
<dbReference type="InterPro" id="IPR011899">
    <property type="entry name" value="Glutaredoxin_euk/vir"/>
</dbReference>
<dbReference type="InterPro" id="IPR014025">
    <property type="entry name" value="Glutaredoxin_subgr"/>
</dbReference>
<dbReference type="InterPro" id="IPR036249">
    <property type="entry name" value="Thioredoxin-like_sf"/>
</dbReference>
<dbReference type="NCBIfam" id="TIGR02180">
    <property type="entry name" value="GRX_euk"/>
    <property type="match status" value="1"/>
</dbReference>
<dbReference type="PANTHER" id="PTHR46679">
    <property type="match status" value="1"/>
</dbReference>
<dbReference type="PANTHER" id="PTHR46679:SF1">
    <property type="entry name" value="GLUTAREDOXIN-2, MITOCHONDRIAL"/>
    <property type="match status" value="1"/>
</dbReference>
<dbReference type="Pfam" id="PF00462">
    <property type="entry name" value="Glutaredoxin"/>
    <property type="match status" value="1"/>
</dbReference>
<dbReference type="PRINTS" id="PR00160">
    <property type="entry name" value="GLUTAREDOXIN"/>
</dbReference>
<dbReference type="SUPFAM" id="SSF52833">
    <property type="entry name" value="Thioredoxin-like"/>
    <property type="match status" value="1"/>
</dbReference>
<dbReference type="PROSITE" id="PS51354">
    <property type="entry name" value="GLUTAREDOXIN_2"/>
    <property type="match status" value="1"/>
</dbReference>
<sequence length="164" mass="18052">MIWRRAALAGTRLVWSRSGSAGWLDRAAGAAGAAAAAASGMESNTSSSLENLATAPVNQIQETISDNCVVIFSKTSCSYCTMAKKLFHDMNVNYKVVELDLLEYGNQFQDALYKMTGERTVPRIFVNGTFIGGATDTHRLHKEGKLLPLVHQCYLKKSKRKEFQ</sequence>
<feature type="transit peptide" description="Mitochondrion" evidence="2">
    <location>
        <begin position="1"/>
        <end position="19"/>
    </location>
</feature>
<feature type="chain" id="PRO_0000011628" description="Glutaredoxin-2, mitochondrial">
    <location>
        <begin position="20"/>
        <end position="164"/>
    </location>
</feature>
<feature type="domain" description="Glutaredoxin" evidence="3">
    <location>
        <begin position="57"/>
        <end position="157"/>
    </location>
</feature>
<feature type="binding site" description="in inactive form" evidence="14">
    <location>
        <position position="68"/>
    </location>
    <ligand>
        <name>[2Fe-2S] cluster</name>
        <dbReference type="ChEBI" id="CHEBI:190135"/>
        <note>ligand shared between dimeric partners</note>
    </ligand>
</feature>
<feature type="binding site" evidence="11">
    <location>
        <position position="74"/>
    </location>
    <ligand>
        <name>glutathione</name>
        <dbReference type="ChEBI" id="CHEBI:57925"/>
    </ligand>
</feature>
<feature type="binding site" evidence="11">
    <location>
        <position position="109"/>
    </location>
    <ligand>
        <name>glutathione</name>
        <dbReference type="ChEBI" id="CHEBI:57925"/>
    </ligand>
</feature>
<feature type="binding site" evidence="11">
    <location>
        <position position="121"/>
    </location>
    <ligand>
        <name>glutathione</name>
        <dbReference type="ChEBI" id="CHEBI:57925"/>
    </ligand>
</feature>
<feature type="binding site" description="in inactive form" evidence="14">
    <location>
        <position position="153"/>
    </location>
    <ligand>
        <name>[2Fe-2S] cluster</name>
        <dbReference type="ChEBI" id="CHEBI:190135"/>
        <note>ligand shared between dimeric partners</note>
    </ligand>
</feature>
<feature type="modified residue" description="Phosphoserine" evidence="15">
    <location>
        <position position="20"/>
    </location>
</feature>
<feature type="modified residue" description="S-glutathionyl cysteine; alternate" evidence="11">
    <location>
        <position position="77"/>
    </location>
</feature>
<feature type="disulfide bond" description="Redox-active; alternate" evidence="1">
    <location>
        <begin position="77"/>
        <end position="80"/>
    </location>
</feature>
<feature type="splice variant" id="VSP_015221" description="In isoform 2." evidence="13">
    <original>MIWRRAALAGTRLVWSRSGSAGWLDRAAGAAGAAAAAASG</original>
    <variation>MNPRDKQVSRFSPLKDVYTWVALAGIQRSGSPGRTRSAARR</variation>
    <location>
        <begin position="1"/>
        <end position="40"/>
    </location>
</feature>
<feature type="sequence variant" id="VAR_025234" description="In dbSNP:rs34237236." evidence="12">
    <original>K</original>
    <variation>E</variation>
    <location>
        <position position="95"/>
    </location>
</feature>
<feature type="mutagenesis site" description="Abolishes absorption at 320 nm and 420 nm suggesting the loss of 2Fe-2S-binding." evidence="10">
    <original>C</original>
    <variation>S</variation>
    <location>
        <position position="68"/>
    </location>
</feature>
<feature type="mutagenesis site" description="Specifically increases the specific activity but decreases affinity for glutathionylated substrates." evidence="5">
    <original>S</original>
    <variation>P</variation>
    <location>
        <position position="78"/>
    </location>
</feature>
<feature type="mutagenesis site" description="Strongly impairs enzymatic activity." evidence="5">
    <original>C</original>
    <variation>S</variation>
    <location>
        <position position="80"/>
    </location>
</feature>
<feature type="mutagenesis site" description="Abolishes absorption at 320 nm and 420 nm suggesting the loss of 2Fe-2S-binding." evidence="10">
    <original>C</original>
    <variation>S</variation>
    <location>
        <position position="153"/>
    </location>
</feature>
<feature type="helix" evidence="17">
    <location>
        <begin position="57"/>
        <end position="66"/>
    </location>
</feature>
<feature type="strand" evidence="17">
    <location>
        <begin position="68"/>
        <end position="73"/>
    </location>
</feature>
<feature type="helix" evidence="17">
    <location>
        <begin position="78"/>
        <end position="90"/>
    </location>
</feature>
<feature type="strand" evidence="17">
    <location>
        <begin position="95"/>
        <end position="98"/>
    </location>
</feature>
<feature type="helix" evidence="17">
    <location>
        <begin position="99"/>
        <end position="101"/>
    </location>
</feature>
<feature type="helix" evidence="17">
    <location>
        <begin position="105"/>
        <end position="116"/>
    </location>
</feature>
<feature type="strand" evidence="17">
    <location>
        <begin position="123"/>
        <end position="126"/>
    </location>
</feature>
<feature type="strand" evidence="17">
    <location>
        <begin position="129"/>
        <end position="133"/>
    </location>
</feature>
<feature type="helix" evidence="17">
    <location>
        <begin position="134"/>
        <end position="142"/>
    </location>
</feature>
<feature type="helix" evidence="17">
    <location>
        <begin position="146"/>
        <end position="152"/>
    </location>
</feature>
<feature type="strand" evidence="16">
    <location>
        <begin position="154"/>
        <end position="156"/>
    </location>
</feature>
<feature type="helix" evidence="17">
    <location>
        <begin position="160"/>
        <end position="162"/>
    </location>
</feature>
<feature type="sequence variant" id="VAR_082825" description="In dbSNP:rs10921310." evidence="14">
    <original>R</original>
    <variation>W</variation>
    <location sequence="Q9NS18-2">
        <position position="40"/>
    </location>
</feature>
<gene>
    <name type="primary">GLRX2</name>
    <name type="synonym">GRX2</name>
    <name type="ORF">CGI-133</name>
</gene>
<accession>Q9NS18</accession>
<accession>Q3LR69</accession>
<accession>Q7L1N7</accession>
<accession>Q96JC0</accession>
<accession>Q9Y3D4</accession>
<proteinExistence type="evidence at protein level"/>
<keyword id="KW-0001">2Fe-2S</keyword>
<keyword id="KW-0002">3D-structure</keyword>
<keyword id="KW-0025">Alternative splicing</keyword>
<keyword id="KW-1015">Disulfide bond</keyword>
<keyword id="KW-0249">Electron transport</keyword>
<keyword id="KW-0318">Glutathionylation</keyword>
<keyword id="KW-0408">Iron</keyword>
<keyword id="KW-0411">Iron-sulfur</keyword>
<keyword id="KW-0479">Metal-binding</keyword>
<keyword id="KW-0496">Mitochondrion</keyword>
<keyword id="KW-0539">Nucleus</keyword>
<keyword id="KW-0597">Phosphoprotein</keyword>
<keyword id="KW-1267">Proteomics identification</keyword>
<keyword id="KW-0676">Redox-active center</keyword>
<keyword id="KW-1185">Reference proteome</keyword>
<keyword id="KW-0809">Transit peptide</keyword>
<keyword id="KW-0813">Transport</keyword>
<reference key="1">
    <citation type="journal article" date="2001" name="J. Biol. Chem.">
        <title>Cloning and expression of a novel human glutaredoxin (Grx2) with mitochondrial and nuclear isoforms.</title>
        <authorList>
            <person name="Lundberg M."/>
            <person name="Johansson C."/>
            <person name="Chandra J."/>
            <person name="Enoksson M."/>
            <person name="Jacobsson G."/>
            <person name="Ljung J."/>
            <person name="Johansson M."/>
            <person name="Holmgren A."/>
        </authorList>
    </citation>
    <scope>NUCLEOTIDE SEQUENCE [MRNA] (ISOFORMS 1 AND 2)</scope>
    <scope>FUNCTION</scope>
    <scope>SUBCELLULAR LOCATION</scope>
    <scope>TISSUE SPECIFICITY</scope>
    <source>
        <tissue>Colon</tissue>
        <tissue>Testis</tissue>
    </source>
</reference>
<reference key="2">
    <citation type="journal article" date="2001" name="J. Biol. Chem.">
        <title>Identification and characterization of a new mammalian glutaredoxin (thioltransferase), Grx2.</title>
        <authorList>
            <person name="Gladyshev V.N."/>
            <person name="Liu A."/>
            <person name="Novoselov S.V."/>
            <person name="Krysan K."/>
            <person name="Sun Q.-A."/>
            <person name="Kryukov V.M."/>
            <person name="Kryukov G.V."/>
            <person name="Lou M.F."/>
        </authorList>
    </citation>
    <scope>NUCLEOTIDE SEQUENCE [MRNA] (ISOFORM 1)</scope>
</reference>
<reference key="3">
    <citation type="submission" date="2005-09" db="EMBL/GenBank/DDBJ databases">
        <authorList>
            <consortium name="NIEHS SNPs program"/>
        </authorList>
    </citation>
    <scope>NUCLEOTIDE SEQUENCE [GENOMIC DNA]</scope>
    <scope>VARIANT GLU-95</scope>
</reference>
<reference key="4">
    <citation type="journal article" date="2006" name="Nature">
        <title>The DNA sequence and biological annotation of human chromosome 1.</title>
        <authorList>
            <person name="Gregory S.G."/>
            <person name="Barlow K.F."/>
            <person name="McLay K.E."/>
            <person name="Kaul R."/>
            <person name="Swarbreck D."/>
            <person name="Dunham A."/>
            <person name="Scott C.E."/>
            <person name="Howe K.L."/>
            <person name="Woodfine K."/>
            <person name="Spencer C.C.A."/>
            <person name="Jones M.C."/>
            <person name="Gillson C."/>
            <person name="Searle S."/>
            <person name="Zhou Y."/>
            <person name="Kokocinski F."/>
            <person name="McDonald L."/>
            <person name="Evans R."/>
            <person name="Phillips K."/>
            <person name="Atkinson A."/>
            <person name="Cooper R."/>
            <person name="Jones C."/>
            <person name="Hall R.E."/>
            <person name="Andrews T.D."/>
            <person name="Lloyd C."/>
            <person name="Ainscough R."/>
            <person name="Almeida J.P."/>
            <person name="Ambrose K.D."/>
            <person name="Anderson F."/>
            <person name="Andrew R.W."/>
            <person name="Ashwell R.I.S."/>
            <person name="Aubin K."/>
            <person name="Babbage A.K."/>
            <person name="Bagguley C.L."/>
            <person name="Bailey J."/>
            <person name="Beasley H."/>
            <person name="Bethel G."/>
            <person name="Bird C.P."/>
            <person name="Bray-Allen S."/>
            <person name="Brown J.Y."/>
            <person name="Brown A.J."/>
            <person name="Buckley D."/>
            <person name="Burton J."/>
            <person name="Bye J."/>
            <person name="Carder C."/>
            <person name="Chapman J.C."/>
            <person name="Clark S.Y."/>
            <person name="Clarke G."/>
            <person name="Clee C."/>
            <person name="Cobley V."/>
            <person name="Collier R.E."/>
            <person name="Corby N."/>
            <person name="Coville G.J."/>
            <person name="Davies J."/>
            <person name="Deadman R."/>
            <person name="Dunn M."/>
            <person name="Earthrowl M."/>
            <person name="Ellington A.G."/>
            <person name="Errington H."/>
            <person name="Frankish A."/>
            <person name="Frankland J."/>
            <person name="French L."/>
            <person name="Garner P."/>
            <person name="Garnett J."/>
            <person name="Gay L."/>
            <person name="Ghori M.R.J."/>
            <person name="Gibson R."/>
            <person name="Gilby L.M."/>
            <person name="Gillett W."/>
            <person name="Glithero R.J."/>
            <person name="Grafham D.V."/>
            <person name="Griffiths C."/>
            <person name="Griffiths-Jones S."/>
            <person name="Grocock R."/>
            <person name="Hammond S."/>
            <person name="Harrison E.S.I."/>
            <person name="Hart E."/>
            <person name="Haugen E."/>
            <person name="Heath P.D."/>
            <person name="Holmes S."/>
            <person name="Holt K."/>
            <person name="Howden P.J."/>
            <person name="Hunt A.R."/>
            <person name="Hunt S.E."/>
            <person name="Hunter G."/>
            <person name="Isherwood J."/>
            <person name="James R."/>
            <person name="Johnson C."/>
            <person name="Johnson D."/>
            <person name="Joy A."/>
            <person name="Kay M."/>
            <person name="Kershaw J.K."/>
            <person name="Kibukawa M."/>
            <person name="Kimberley A.M."/>
            <person name="King A."/>
            <person name="Knights A.J."/>
            <person name="Lad H."/>
            <person name="Laird G."/>
            <person name="Lawlor S."/>
            <person name="Leongamornlert D.A."/>
            <person name="Lloyd D.M."/>
            <person name="Loveland J."/>
            <person name="Lovell J."/>
            <person name="Lush M.J."/>
            <person name="Lyne R."/>
            <person name="Martin S."/>
            <person name="Mashreghi-Mohammadi M."/>
            <person name="Matthews L."/>
            <person name="Matthews N.S.W."/>
            <person name="McLaren S."/>
            <person name="Milne S."/>
            <person name="Mistry S."/>
            <person name="Moore M.J.F."/>
            <person name="Nickerson T."/>
            <person name="O'Dell C.N."/>
            <person name="Oliver K."/>
            <person name="Palmeiri A."/>
            <person name="Palmer S.A."/>
            <person name="Parker A."/>
            <person name="Patel D."/>
            <person name="Pearce A.V."/>
            <person name="Peck A.I."/>
            <person name="Pelan S."/>
            <person name="Phelps K."/>
            <person name="Phillimore B.J."/>
            <person name="Plumb R."/>
            <person name="Rajan J."/>
            <person name="Raymond C."/>
            <person name="Rouse G."/>
            <person name="Saenphimmachak C."/>
            <person name="Sehra H.K."/>
            <person name="Sheridan E."/>
            <person name="Shownkeen R."/>
            <person name="Sims S."/>
            <person name="Skuce C.D."/>
            <person name="Smith M."/>
            <person name="Steward C."/>
            <person name="Subramanian S."/>
            <person name="Sycamore N."/>
            <person name="Tracey A."/>
            <person name="Tromans A."/>
            <person name="Van Helmond Z."/>
            <person name="Wall M."/>
            <person name="Wallis J.M."/>
            <person name="White S."/>
            <person name="Whitehead S.L."/>
            <person name="Wilkinson J.E."/>
            <person name="Willey D.L."/>
            <person name="Williams H."/>
            <person name="Wilming L."/>
            <person name="Wray P.W."/>
            <person name="Wu Z."/>
            <person name="Coulson A."/>
            <person name="Vaudin M."/>
            <person name="Sulston J.E."/>
            <person name="Durbin R.M."/>
            <person name="Hubbard T."/>
            <person name="Wooster R."/>
            <person name="Dunham I."/>
            <person name="Carter N.P."/>
            <person name="McVean G."/>
            <person name="Ross M.T."/>
            <person name="Harrow J."/>
            <person name="Olson M.V."/>
            <person name="Beck S."/>
            <person name="Rogers J."/>
            <person name="Bentley D.R."/>
        </authorList>
    </citation>
    <scope>NUCLEOTIDE SEQUENCE [LARGE SCALE GENOMIC DNA]</scope>
</reference>
<reference key="5">
    <citation type="journal article" date="2000" name="Genome Res.">
        <title>Identification of novel human genes evolutionarily conserved in Caenorhabditis elegans by comparative proteomics.</title>
        <authorList>
            <person name="Lai C.-H."/>
            <person name="Chou C.-Y."/>
            <person name="Ch'ang L.-Y."/>
            <person name="Liu C.-S."/>
            <person name="Lin W.-C."/>
        </authorList>
    </citation>
    <scope>NUCLEOTIDE SEQUENCE [LARGE SCALE MRNA] OF 4-164 (ISOFORM 1)</scope>
</reference>
<reference key="6">
    <citation type="journal article" date="2004" name="Genome Res.">
        <title>The status, quality, and expansion of the NIH full-length cDNA project: the Mammalian Gene Collection (MGC).</title>
        <authorList>
            <consortium name="The MGC Project Team"/>
        </authorList>
    </citation>
    <scope>NUCLEOTIDE SEQUENCE [LARGE SCALE MRNA] OF 4-164 (ISOFORM 1)</scope>
    <source>
        <tissue>Mammary gland</tissue>
    </source>
</reference>
<reference key="7">
    <citation type="journal article" date="2004" name="Biochem. Biophys. Res. Commun.">
        <title>Cellular and plasma levels of human glutaredoxin 1 and 2 detected by sensitive ELISA systems.</title>
        <authorList>
            <person name="Lundberg M."/>
            <person name="Fernandes A.P."/>
            <person name="Kumar S."/>
            <person name="Holmgren A."/>
        </authorList>
    </citation>
    <scope>TISSUE SPECIFICITY</scope>
</reference>
<reference key="8">
    <citation type="journal article" date="2004" name="Hum. Pathol.">
        <title>Expression of glutaredoxin is highly cell specific in human lung and is decreased by transforming growth factor-beta in vitro and in interstitial lung diseases in vivo.</title>
        <authorList>
            <person name="Peltoniemi M."/>
            <person name="Kaarteenaho-Wiik R."/>
            <person name="Saily M."/>
            <person name="Sormunen R."/>
            <person name="Paakko P."/>
            <person name="Holmgren A."/>
            <person name="Soini Y."/>
            <person name="Kinnula V.L."/>
        </authorList>
    </citation>
    <scope>TISSUE SPECIFICITY</scope>
</reference>
<reference key="9">
    <citation type="journal article" date="2004" name="J. Biol. Chem.">
        <title>Human mitochondrial glutaredoxin reduces S-glutathionylated proteins with high affinity accepting electrons from either glutathione or thioredoxin reductase.</title>
        <authorList>
            <person name="Johansson C."/>
            <person name="Lillig C.H."/>
            <person name="Holmgren A."/>
        </authorList>
    </citation>
    <scope>FUNCTION</scope>
    <scope>BIOPHYSICOCHEMICAL PROPERTIES</scope>
    <scope>MUTAGENESIS OF SER-78 AND CYS-80</scope>
</reference>
<reference key="10">
    <citation type="journal article" date="2004" name="Proc. Natl. Acad. Sci. U.S.A.">
        <title>Short interfering RNA-mediated silencing of glutaredoxin 2 increases the sensitivity of HeLa cells toward doxorubicin and phenylarsine oxide.</title>
        <authorList>
            <person name="Lillig C.H."/>
            <person name="Loenn M.E."/>
            <person name="Enoksson M."/>
            <person name="Fernandes A.P."/>
            <person name="Holmgren A."/>
        </authorList>
    </citation>
    <scope>FUNCTION</scope>
</reference>
<reference key="11">
    <citation type="journal article" date="2005" name="Biochem. Biophys. Res. Commun.">
        <title>Overexpression of glutaredoxin 2 attenuates apoptosis by preventing cytochrome c release.</title>
        <authorList>
            <person name="Enoksson M."/>
            <person name="Fernandes A.P."/>
            <person name="Prast S."/>
            <person name="Lillig C.H."/>
            <person name="Holmgren A."/>
            <person name="Orrenius S."/>
        </authorList>
    </citation>
    <scope>FUNCTION</scope>
</reference>
<reference key="12">
    <citation type="journal article" date="2005" name="Proc. Natl. Acad. Sci. U.S.A.">
        <title>Characterization of human glutaredoxin 2 as iron-sulfur protein: a possible role as redox sensor.</title>
        <authorList>
            <person name="Lillig C.H."/>
            <person name="Berndt C."/>
            <person name="Vergnolle O."/>
            <person name="Loenn M.E."/>
            <person name="Hudemann C."/>
            <person name="Bill E."/>
            <person name="Holmgren A."/>
        </authorList>
    </citation>
    <scope>SUBUNIT</scope>
    <scope>ACTIVITY REGULATION</scope>
    <scope>METAL-BINDING</scope>
    <scope>MUTAGENESIS OF CYS-68 AND CYS-153</scope>
</reference>
<reference key="13">
    <citation type="journal article" date="2013" name="J. Proteome Res.">
        <title>Toward a comprehensive characterization of a human cancer cell phosphoproteome.</title>
        <authorList>
            <person name="Zhou H."/>
            <person name="Di Palma S."/>
            <person name="Preisinger C."/>
            <person name="Peng M."/>
            <person name="Polat A.N."/>
            <person name="Heck A.J."/>
            <person name="Mohammed S."/>
        </authorList>
    </citation>
    <scope>PHOSPHORYLATION [LARGE SCALE ANALYSIS] AT SER-20</scope>
    <scope>IDENTIFICATION BY MASS SPECTROMETRY [LARGE SCALE ANALYSIS]</scope>
    <source>
        <tissue>Erythroleukemia</tissue>
    </source>
</reference>
<reference key="14">
    <citation type="submission" date="2005-11" db="PDB data bank">
        <title>Solution structure of RSGI RUH-044, an N-terminal 2 domain of glutaredoxin 2 from human cDNA.</title>
        <authorList>
            <consortium name="RIKEN structural genomics initiative (RSGI)"/>
        </authorList>
    </citation>
    <scope>STRUCTURE BY NMR OF 48-164</scope>
</reference>
<reference key="15">
    <citation type="journal article" date="2007" name="J. Biol. Chem.">
        <title>Reversible sequestration of active site cysteines in a 2Fe-2S-bridged dimer provides a mechanism for glutaredoxin 2 regulation in human mitochondria.</title>
        <authorList>
            <person name="Johansson C."/>
            <person name="Kavanagh K.L."/>
            <person name="Gileadi O."/>
            <person name="Oppermann U."/>
        </authorList>
    </citation>
    <scope>X-RAY CRYSTALLOGRAPHY (2.05 ANGSTROMS) OF 50-164 IN COMPLEX WITH GLUTATHIONE</scope>
    <scope>GLUTATHIONYLATION AT CYS-77</scope>
    <scope>DISULFIDE BOND</scope>
</reference>
<organism>
    <name type="scientific">Homo sapiens</name>
    <name type="common">Human</name>
    <dbReference type="NCBI Taxonomy" id="9606"/>
    <lineage>
        <taxon>Eukaryota</taxon>
        <taxon>Metazoa</taxon>
        <taxon>Chordata</taxon>
        <taxon>Craniata</taxon>
        <taxon>Vertebrata</taxon>
        <taxon>Euteleostomi</taxon>
        <taxon>Mammalia</taxon>
        <taxon>Eutheria</taxon>
        <taxon>Euarchontoglires</taxon>
        <taxon>Primates</taxon>
        <taxon>Haplorrhini</taxon>
        <taxon>Catarrhini</taxon>
        <taxon>Hominidae</taxon>
        <taxon>Homo</taxon>
    </lineage>
</organism>